<proteinExistence type="inferred from homology"/>
<accession>B5RFR0</accession>
<name>WZYE_SALG2</name>
<reference key="1">
    <citation type="journal article" date="2008" name="Genome Res.">
        <title>Comparative genome analysis of Salmonella enteritidis PT4 and Salmonella gallinarum 287/91 provides insights into evolutionary and host adaptation pathways.</title>
        <authorList>
            <person name="Thomson N.R."/>
            <person name="Clayton D.J."/>
            <person name="Windhorst D."/>
            <person name="Vernikos G."/>
            <person name="Davidson S."/>
            <person name="Churcher C."/>
            <person name="Quail M.A."/>
            <person name="Stevens M."/>
            <person name="Jones M.A."/>
            <person name="Watson M."/>
            <person name="Barron A."/>
            <person name="Layton A."/>
            <person name="Pickard D."/>
            <person name="Kingsley R.A."/>
            <person name="Bignell A."/>
            <person name="Clark L."/>
            <person name="Harris B."/>
            <person name="Ormond D."/>
            <person name="Abdellah Z."/>
            <person name="Brooks K."/>
            <person name="Cherevach I."/>
            <person name="Chillingworth T."/>
            <person name="Woodward J."/>
            <person name="Norberczak H."/>
            <person name="Lord A."/>
            <person name="Arrowsmith C."/>
            <person name="Jagels K."/>
            <person name="Moule S."/>
            <person name="Mungall K."/>
            <person name="Saunders M."/>
            <person name="Whitehead S."/>
            <person name="Chabalgoity J.A."/>
            <person name="Maskell D."/>
            <person name="Humphreys T."/>
            <person name="Roberts M."/>
            <person name="Barrow P.A."/>
            <person name="Dougan G."/>
            <person name="Parkhill J."/>
        </authorList>
    </citation>
    <scope>NUCLEOTIDE SEQUENCE [LARGE SCALE GENOMIC DNA]</scope>
    <source>
        <strain>287/91 / NCTC 13346</strain>
    </source>
</reference>
<protein>
    <recommendedName>
        <fullName evidence="1">Probable ECA polymerase</fullName>
    </recommendedName>
</protein>
<gene>
    <name evidence="1" type="primary">wzyE</name>
    <name type="ordered locus">SG3515</name>
</gene>
<keyword id="KW-0997">Cell inner membrane</keyword>
<keyword id="KW-1003">Cell membrane</keyword>
<keyword id="KW-0472">Membrane</keyword>
<keyword id="KW-0812">Transmembrane</keyword>
<keyword id="KW-1133">Transmembrane helix</keyword>
<sequence length="452" mass="51662">MSLMQFSGLLVVWLLSTLFIATLTWFEFRRVRFNFNVFFSLLFLLTFFFGFPLTSVLVFRFDVGVAPPEILLQALLSAACFYGVYYVTYKTRLRKRVVDVPRKPLFTMNRVETHLTWVILMGIALVSVAIFFMHNGFLLFRLHSYSQIFSSEVSGVALKRFFYFFIPAMLVVYFLRQDSKAWLFFLVSTVAFGLLTYMIVGGTRANIIIAFAIFLFIGIIRGWISLWMLAAAGVLGIVGMFWLALKRYGLNVSGDEAFYTFLYLTRDTFSPWENLALLLQNYHNIDFQGLAPIVRDFYVFIPTWLWPGRPSIVLNSANYFTWEVLNNHSGLAISPTLIGSLVVMGGALFIPLGAIVVGLIIKWFDWLYELGNREPNRYKAAILHSFCFGAIFNMIVLVREGLDSFVSRVVFFLVVFGASLLVAKLLFWLFDSAGLIHKRTTSLPQAQVEGKL</sequence>
<dbReference type="EMBL" id="AM933173">
    <property type="protein sequence ID" value="CAR39304.1"/>
    <property type="molecule type" value="Genomic_DNA"/>
</dbReference>
<dbReference type="RefSeq" id="WP_000055606.1">
    <property type="nucleotide sequence ID" value="NC_011274.1"/>
</dbReference>
<dbReference type="KEGG" id="seg:SG3515"/>
<dbReference type="HOGENOM" id="CLU_049711_0_0_6"/>
<dbReference type="UniPathway" id="UPA00566"/>
<dbReference type="Proteomes" id="UP000008321">
    <property type="component" value="Chromosome"/>
</dbReference>
<dbReference type="GO" id="GO:0005886">
    <property type="term" value="C:plasma membrane"/>
    <property type="evidence" value="ECO:0007669"/>
    <property type="project" value="UniProtKB-SubCell"/>
</dbReference>
<dbReference type="GO" id="GO:0009246">
    <property type="term" value="P:enterobacterial common antigen biosynthetic process"/>
    <property type="evidence" value="ECO:0007669"/>
    <property type="project" value="UniProtKB-UniRule"/>
</dbReference>
<dbReference type="HAMAP" id="MF_01003">
    <property type="entry name" value="WzyE"/>
    <property type="match status" value="1"/>
</dbReference>
<dbReference type="InterPro" id="IPR010691">
    <property type="entry name" value="WzyE"/>
</dbReference>
<dbReference type="NCBIfam" id="NF002820">
    <property type="entry name" value="PRK02975.1"/>
    <property type="match status" value="1"/>
</dbReference>
<dbReference type="Pfam" id="PF06899">
    <property type="entry name" value="WzyE"/>
    <property type="match status" value="1"/>
</dbReference>
<evidence type="ECO:0000255" key="1">
    <source>
        <dbReference type="HAMAP-Rule" id="MF_01003"/>
    </source>
</evidence>
<comment type="function">
    <text evidence="1">Probably involved in the polymerization of enterobacterial common antigen (ECA) trisaccharide repeat units.</text>
</comment>
<comment type="pathway">
    <text evidence="1">Bacterial outer membrane biogenesis; enterobacterial common antigen biosynthesis.</text>
</comment>
<comment type="subunit">
    <text evidence="1">Probably part of a complex composed of WzxE, WzyE and WzzE.</text>
</comment>
<comment type="subcellular location">
    <subcellularLocation>
        <location evidence="1">Cell inner membrane</location>
        <topology evidence="1">Multi-pass membrane protein</topology>
    </subcellularLocation>
</comment>
<comment type="similarity">
    <text evidence="1">Belongs to the WzyE family.</text>
</comment>
<organism>
    <name type="scientific">Salmonella gallinarum (strain 287/91 / NCTC 13346)</name>
    <dbReference type="NCBI Taxonomy" id="550538"/>
    <lineage>
        <taxon>Bacteria</taxon>
        <taxon>Pseudomonadati</taxon>
        <taxon>Pseudomonadota</taxon>
        <taxon>Gammaproteobacteria</taxon>
        <taxon>Enterobacterales</taxon>
        <taxon>Enterobacteriaceae</taxon>
        <taxon>Salmonella</taxon>
    </lineage>
</organism>
<feature type="chain" id="PRO_1000200215" description="Probable ECA polymerase">
    <location>
        <begin position="1"/>
        <end position="452"/>
    </location>
</feature>
<feature type="transmembrane region" description="Helical" evidence="1">
    <location>
        <begin position="6"/>
        <end position="26"/>
    </location>
</feature>
<feature type="transmembrane region" description="Helical" evidence="1">
    <location>
        <begin position="37"/>
        <end position="57"/>
    </location>
</feature>
<feature type="transmembrane region" description="Helical" evidence="1">
    <location>
        <begin position="63"/>
        <end position="83"/>
    </location>
</feature>
<feature type="transmembrane region" description="Helical" evidence="1">
    <location>
        <begin position="118"/>
        <end position="138"/>
    </location>
</feature>
<feature type="transmembrane region" description="Helical" evidence="1">
    <location>
        <begin position="155"/>
        <end position="175"/>
    </location>
</feature>
<feature type="transmembrane region" description="Helical" evidence="1">
    <location>
        <begin position="181"/>
        <end position="201"/>
    </location>
</feature>
<feature type="transmembrane region" description="Helical" evidence="1">
    <location>
        <begin position="207"/>
        <end position="227"/>
    </location>
</feature>
<feature type="transmembrane region" description="Helical" evidence="1">
    <location>
        <begin position="228"/>
        <end position="248"/>
    </location>
</feature>
<feature type="transmembrane region" description="Helical" evidence="1">
    <location>
        <begin position="341"/>
        <end position="361"/>
    </location>
</feature>
<feature type="transmembrane region" description="Helical" evidence="1">
    <location>
        <begin position="378"/>
        <end position="398"/>
    </location>
</feature>
<feature type="transmembrane region" description="Helical" evidence="1">
    <location>
        <begin position="410"/>
        <end position="430"/>
    </location>
</feature>